<gene>
    <name type="primary">gnrh3</name>
</gene>
<proteinExistence type="inferred from homology"/>
<protein>
    <recommendedName>
        <fullName>Progonadoliberin-3</fullName>
    </recommendedName>
    <alternativeName>
        <fullName>Progonadoliberin III</fullName>
    </alternativeName>
    <component>
        <recommendedName>
            <fullName>Gonadoliberin-3</fullName>
        </recommendedName>
        <alternativeName>
            <fullName>Gonadoliberin III</fullName>
        </alternativeName>
        <alternativeName>
            <fullName>Gonadotropin-releasing hormone III</fullName>
            <shortName>GnRH III</shortName>
        </alternativeName>
        <alternativeName>
            <fullName>Luliberin III</fullName>
        </alternativeName>
        <alternativeName>
            <fullName>Luteinizing hormone-releasing hormone III</fullName>
            <shortName>LH-RH III</shortName>
        </alternativeName>
    </component>
    <component>
        <recommendedName>
            <fullName>GnRH-associated peptide 3</fullName>
        </recommendedName>
        <alternativeName>
            <fullName>GnRH-associated peptide III</fullName>
        </alternativeName>
    </component>
</protein>
<evidence type="ECO:0000250" key="1"/>
<evidence type="ECO:0000255" key="2"/>
<evidence type="ECO:0000305" key="3"/>
<reference key="1">
    <citation type="journal article" date="1994" name="Gen. Comp. Endocrinol.">
        <title>Molecular cloning of a cDNA encoding the prepro-salmon gonadotropin-releasing hormone of the red seabream.</title>
        <authorList>
            <person name="Okuzawa K."/>
            <person name="Araki K."/>
            <person name="Tanaka H."/>
            <person name="Kagawa H."/>
            <person name="Hirose K."/>
        </authorList>
    </citation>
    <scope>NUCLEOTIDE SEQUENCE [MRNA]</scope>
    <source>
        <tissue>Olfactory bulb</tissue>
    </source>
</reference>
<organism>
    <name type="scientific">Pagrus major</name>
    <name type="common">Red sea bream</name>
    <name type="synonym">Chrysophrys major</name>
    <dbReference type="NCBI Taxonomy" id="143350"/>
    <lineage>
        <taxon>Eukaryota</taxon>
        <taxon>Metazoa</taxon>
        <taxon>Chordata</taxon>
        <taxon>Craniata</taxon>
        <taxon>Vertebrata</taxon>
        <taxon>Euteleostomi</taxon>
        <taxon>Actinopterygii</taxon>
        <taxon>Neopterygii</taxon>
        <taxon>Teleostei</taxon>
        <taxon>Neoteleostei</taxon>
        <taxon>Acanthomorphata</taxon>
        <taxon>Eupercaria</taxon>
        <taxon>Spariformes</taxon>
        <taxon>Sparidae</taxon>
        <taxon>Pagrus</taxon>
    </lineage>
</organism>
<comment type="function">
    <text>Stimulates the secretion of gonadotropins.</text>
</comment>
<comment type="subcellular location">
    <subcellularLocation>
        <location>Secreted</location>
    </subcellularLocation>
</comment>
<comment type="similarity">
    <text evidence="3">Belongs to the GnRH family.</text>
</comment>
<keyword id="KW-0027">Amidation</keyword>
<keyword id="KW-0165">Cleavage on pair of basic residues</keyword>
<keyword id="KW-0372">Hormone</keyword>
<keyword id="KW-0873">Pyrrolidone carboxylic acid</keyword>
<keyword id="KW-0964">Secreted</keyword>
<keyword id="KW-0732">Signal</keyword>
<sequence length="90" mass="10071">MEASSRVTVQVLLLALVVQVTLSQHWSYGWLPGGKRSVGELEATIRMMGTGGVVSLPEEASAQTQERLRPYNVIKDDSSHFDRKKRFPNK</sequence>
<dbReference type="EMBL" id="D26108">
    <property type="protein sequence ID" value="BAA05104.1"/>
    <property type="molecule type" value="mRNA"/>
</dbReference>
<dbReference type="PIR" id="I51095">
    <property type="entry name" value="I51095"/>
</dbReference>
<dbReference type="GO" id="GO:0005615">
    <property type="term" value="C:extracellular space"/>
    <property type="evidence" value="ECO:0000250"/>
    <property type="project" value="UniProtKB"/>
</dbReference>
<dbReference type="GO" id="GO:0005183">
    <property type="term" value="F:gonadotropin hormone-releasing hormone activity"/>
    <property type="evidence" value="ECO:0007669"/>
    <property type="project" value="TreeGrafter"/>
</dbReference>
<dbReference type="GO" id="GO:0031530">
    <property type="term" value="F:gonadotropin-releasing hormone receptor binding"/>
    <property type="evidence" value="ECO:0007669"/>
    <property type="project" value="TreeGrafter"/>
</dbReference>
<dbReference type="InterPro" id="IPR002012">
    <property type="entry name" value="GnRH"/>
</dbReference>
<dbReference type="InterPro" id="IPR019792">
    <property type="entry name" value="Gonadoliberin"/>
</dbReference>
<dbReference type="PANTHER" id="PTHR10522">
    <property type="entry name" value="GONADOLIBERIN"/>
    <property type="match status" value="1"/>
</dbReference>
<dbReference type="PANTHER" id="PTHR10522:SF6">
    <property type="entry name" value="PROGONADOLIBERIN-2"/>
    <property type="match status" value="1"/>
</dbReference>
<dbReference type="Pfam" id="PF00446">
    <property type="entry name" value="GnRH"/>
    <property type="match status" value="1"/>
</dbReference>
<dbReference type="PROSITE" id="PS00473">
    <property type="entry name" value="GNRH"/>
    <property type="match status" value="1"/>
</dbReference>
<name>GON3_PAGMA</name>
<accession>P51921</accession>
<feature type="signal peptide" evidence="1">
    <location>
        <begin position="1"/>
        <end position="23"/>
    </location>
</feature>
<feature type="chain" id="PRO_0000012523" description="Progonadoliberin-3">
    <location>
        <begin position="24"/>
        <end position="90"/>
    </location>
</feature>
<feature type="peptide" id="PRO_0000012524" description="Gonadoliberin-3">
    <location>
        <begin position="24"/>
        <end position="33"/>
    </location>
</feature>
<feature type="peptide" id="PRO_0000012525" description="GnRH-associated peptide 3" evidence="2">
    <location>
        <begin position="37"/>
        <end position="82"/>
    </location>
</feature>
<feature type="modified residue" description="Pyrrolidone carboxylic acid" evidence="1">
    <location>
        <position position="24"/>
    </location>
</feature>
<feature type="modified residue" description="Glycine amide" evidence="1">
    <location>
        <position position="33"/>
    </location>
</feature>